<keyword id="KW-0028">Amino-acid biosynthesis</keyword>
<keyword id="KW-0057">Aromatic amino acid biosynthesis</keyword>
<keyword id="KW-0413">Isomerase</keyword>
<keyword id="KW-0822">Tryptophan biosynthesis</keyword>
<comment type="catalytic activity">
    <reaction evidence="1">
        <text>N-(5-phospho-beta-D-ribosyl)anthranilate = 1-(2-carboxyphenylamino)-1-deoxy-D-ribulose 5-phosphate</text>
        <dbReference type="Rhea" id="RHEA:21540"/>
        <dbReference type="ChEBI" id="CHEBI:18277"/>
        <dbReference type="ChEBI" id="CHEBI:58613"/>
        <dbReference type="EC" id="5.3.1.24"/>
    </reaction>
</comment>
<comment type="pathway">
    <text evidence="1">Amino-acid biosynthesis; L-tryptophan biosynthesis; L-tryptophan from chorismate: step 3/5.</text>
</comment>
<comment type="similarity">
    <text evidence="1">Belongs to the TrpF family.</text>
</comment>
<organism>
    <name type="scientific">Sulfurovum sp. (strain NBC37-1)</name>
    <dbReference type="NCBI Taxonomy" id="387093"/>
    <lineage>
        <taxon>Bacteria</taxon>
        <taxon>Pseudomonadati</taxon>
        <taxon>Campylobacterota</taxon>
        <taxon>Epsilonproteobacteria</taxon>
        <taxon>Campylobacterales</taxon>
        <taxon>Sulfurovaceae</taxon>
        <taxon>Sulfurovum</taxon>
    </lineage>
</organism>
<feature type="chain" id="PRO_1000197130" description="N-(5'-phosphoribosyl)anthranilate isomerase">
    <location>
        <begin position="1"/>
        <end position="196"/>
    </location>
</feature>
<reference key="1">
    <citation type="journal article" date="2007" name="Proc. Natl. Acad. Sci. U.S.A.">
        <title>Deep-sea vent epsilon-proteobacterial genomes provide insights into emergence of pathogens.</title>
        <authorList>
            <person name="Nakagawa S."/>
            <person name="Takaki Y."/>
            <person name="Shimamura S."/>
            <person name="Reysenbach A.-L."/>
            <person name="Takai K."/>
            <person name="Horikoshi K."/>
        </authorList>
    </citation>
    <scope>NUCLEOTIDE SEQUENCE [LARGE SCALE GENOMIC DNA]</scope>
    <source>
        <strain>NBC37-1</strain>
    </source>
</reference>
<dbReference type="EC" id="5.3.1.24" evidence="1"/>
<dbReference type="EMBL" id="AP009179">
    <property type="protein sequence ID" value="BAF73095.1"/>
    <property type="molecule type" value="Genomic_DNA"/>
</dbReference>
<dbReference type="RefSeq" id="WP_012083925.1">
    <property type="nucleotide sequence ID" value="NC_009663.1"/>
</dbReference>
<dbReference type="SMR" id="A6QC86"/>
<dbReference type="STRING" id="387093.SUN_2155"/>
<dbReference type="KEGG" id="sun:SUN_2155"/>
<dbReference type="eggNOG" id="COG0135">
    <property type="taxonomic scope" value="Bacteria"/>
</dbReference>
<dbReference type="HOGENOM" id="CLU_076364_2_0_7"/>
<dbReference type="OrthoDB" id="9796196at2"/>
<dbReference type="UniPathway" id="UPA00035">
    <property type="reaction ID" value="UER00042"/>
</dbReference>
<dbReference type="Proteomes" id="UP000006378">
    <property type="component" value="Chromosome"/>
</dbReference>
<dbReference type="GO" id="GO:0004640">
    <property type="term" value="F:phosphoribosylanthranilate isomerase activity"/>
    <property type="evidence" value="ECO:0007669"/>
    <property type="project" value="UniProtKB-UniRule"/>
</dbReference>
<dbReference type="GO" id="GO:0000162">
    <property type="term" value="P:L-tryptophan biosynthetic process"/>
    <property type="evidence" value="ECO:0007669"/>
    <property type="project" value="UniProtKB-UniRule"/>
</dbReference>
<dbReference type="CDD" id="cd00405">
    <property type="entry name" value="PRAI"/>
    <property type="match status" value="1"/>
</dbReference>
<dbReference type="Gene3D" id="3.20.20.70">
    <property type="entry name" value="Aldolase class I"/>
    <property type="match status" value="1"/>
</dbReference>
<dbReference type="HAMAP" id="MF_00135">
    <property type="entry name" value="PRAI"/>
    <property type="match status" value="1"/>
</dbReference>
<dbReference type="InterPro" id="IPR013785">
    <property type="entry name" value="Aldolase_TIM"/>
</dbReference>
<dbReference type="InterPro" id="IPR001240">
    <property type="entry name" value="PRAI_dom"/>
</dbReference>
<dbReference type="InterPro" id="IPR011060">
    <property type="entry name" value="RibuloseP-bd_barrel"/>
</dbReference>
<dbReference type="InterPro" id="IPR044643">
    <property type="entry name" value="TrpF_fam"/>
</dbReference>
<dbReference type="PANTHER" id="PTHR42894">
    <property type="entry name" value="N-(5'-PHOSPHORIBOSYL)ANTHRANILATE ISOMERASE"/>
    <property type="match status" value="1"/>
</dbReference>
<dbReference type="PANTHER" id="PTHR42894:SF1">
    <property type="entry name" value="N-(5'-PHOSPHORIBOSYL)ANTHRANILATE ISOMERASE"/>
    <property type="match status" value="1"/>
</dbReference>
<dbReference type="Pfam" id="PF00697">
    <property type="entry name" value="PRAI"/>
    <property type="match status" value="1"/>
</dbReference>
<dbReference type="SUPFAM" id="SSF51366">
    <property type="entry name" value="Ribulose-phoshate binding barrel"/>
    <property type="match status" value="1"/>
</dbReference>
<name>TRPF_SULNB</name>
<protein>
    <recommendedName>
        <fullName evidence="1">N-(5'-phosphoribosyl)anthranilate isomerase</fullName>
        <shortName evidence="1">PRAI</shortName>
        <ecNumber evidence="1">5.3.1.24</ecNumber>
    </recommendedName>
</protein>
<evidence type="ECO:0000255" key="1">
    <source>
        <dbReference type="HAMAP-Rule" id="MF_00135"/>
    </source>
</evidence>
<proteinExistence type="inferred from homology"/>
<accession>A6QC86</accession>
<sequence length="196" mass="21967">MRVKICGITNLRDALHAVECGADALGFVFYNESPRYITPKDAKRIIDQLPPFVERVGLFVNEGVETIDTVCRYSDISLAQIHFDVDEESLDAISLKTLPVVRARTAEDVHRFPDRYRLVDAYCEAYGGSGKRLNLEWFDGVDCSRIILAGGLTPDNVNEVKQYGFYGVDVSSGVESVKGKKDLQKVERFLRNAKSL</sequence>
<gene>
    <name evidence="1" type="primary">trpF</name>
    <name type="ordered locus">SUN_2155</name>
</gene>